<sequence length="242" mass="28081">MLTRKIKLWDINAHITCRLCSGYLIDATTVTECLHTFCRSCLVKYLEENNTCPTCRIVIHQSHPLQYIGHDRTMQDIVYKLVPGLQEAEMRKQREFYHKLGLEVPGDIKGETCSAKQHLDPHRNGETKADDSSNKEAAEEKQEEDGDYHRSDEQVSICLECNSSKLRGLKRKWIRCSAQATVLHLKKFIAKKLNLSSFNELDILCNEEILGKDHTLKFVVVTRWRFKKAPLLLHYRPKMDLL</sequence>
<proteinExistence type="evidence at transcript level"/>
<accession>Q2KJ29</accession>
<reference key="1">
    <citation type="submission" date="2005-09" db="EMBL/GenBank/DDBJ databases">
        <authorList>
            <consortium name="NIH - Mammalian Gene Collection (MGC) project"/>
        </authorList>
    </citation>
    <scope>NUCLEOTIDE SEQUENCE [LARGE SCALE MRNA]</scope>
    <source>
        <strain>Hereford</strain>
        <tissue>Ascending colon</tissue>
    </source>
</reference>
<keyword id="KW-0479">Metal-binding</keyword>
<keyword id="KW-0539">Nucleus</keyword>
<keyword id="KW-1185">Reference proteome</keyword>
<keyword id="KW-0678">Repressor</keyword>
<keyword id="KW-0804">Transcription</keyword>
<keyword id="KW-0805">Transcription regulation</keyword>
<keyword id="KW-0862">Zinc</keyword>
<keyword id="KW-0863">Zinc-finger</keyword>
<name>PCGF3_BOVIN</name>
<gene>
    <name type="primary">PCGF3</name>
</gene>
<dbReference type="EMBL" id="BC105550">
    <property type="protein sequence ID" value="AAI05551.1"/>
    <property type="molecule type" value="mRNA"/>
</dbReference>
<dbReference type="RefSeq" id="NP_001040032.1">
    <property type="nucleotide sequence ID" value="NM_001046567.1"/>
</dbReference>
<dbReference type="RefSeq" id="XP_059743640.1">
    <property type="nucleotide sequence ID" value="XM_059887657.1"/>
</dbReference>
<dbReference type="SMR" id="Q2KJ29"/>
<dbReference type="FunCoup" id="Q2KJ29">
    <property type="interactions" value="2919"/>
</dbReference>
<dbReference type="STRING" id="9913.ENSBTAP00000063193"/>
<dbReference type="PaxDb" id="9913-ENSBTAP00000054369"/>
<dbReference type="Ensembl" id="ENSBTAT00000018621.6">
    <property type="protein sequence ID" value="ENSBTAP00000018621.6"/>
    <property type="gene ID" value="ENSBTAG00000014017.7"/>
</dbReference>
<dbReference type="GeneID" id="615967"/>
<dbReference type="KEGG" id="bta:615967"/>
<dbReference type="CTD" id="10336"/>
<dbReference type="VEuPathDB" id="HostDB:ENSBTAG00000014017"/>
<dbReference type="VGNC" id="VGNC:97295">
    <property type="gene designation" value="PCGF3"/>
</dbReference>
<dbReference type="eggNOG" id="KOG2660">
    <property type="taxonomic scope" value="Eukaryota"/>
</dbReference>
<dbReference type="GeneTree" id="ENSGT00940000158395"/>
<dbReference type="InParanoid" id="Q2KJ29"/>
<dbReference type="OMA" id="EHITCEI"/>
<dbReference type="OrthoDB" id="1305878at2759"/>
<dbReference type="Proteomes" id="UP000009136">
    <property type="component" value="Chromosome 6"/>
</dbReference>
<dbReference type="Bgee" id="ENSBTAG00000014017">
    <property type="expression patterns" value="Expressed in ruminant reticulum and 106 other cell types or tissues"/>
</dbReference>
<dbReference type="GO" id="GO:0005654">
    <property type="term" value="C:nucleoplasm"/>
    <property type="evidence" value="ECO:0007669"/>
    <property type="project" value="UniProtKB-SubCell"/>
</dbReference>
<dbReference type="GO" id="GO:0031519">
    <property type="term" value="C:PcG protein complex"/>
    <property type="evidence" value="ECO:0000250"/>
    <property type="project" value="UniProtKB"/>
</dbReference>
<dbReference type="GO" id="GO:0035102">
    <property type="term" value="C:PRC1 complex"/>
    <property type="evidence" value="ECO:0000318"/>
    <property type="project" value="GO_Central"/>
</dbReference>
<dbReference type="GO" id="GO:0000805">
    <property type="term" value="C:X chromosome"/>
    <property type="evidence" value="ECO:0007669"/>
    <property type="project" value="Ensembl"/>
</dbReference>
<dbReference type="GO" id="GO:0140862">
    <property type="term" value="F:histone H2AK119 ubiquitin ligase activity"/>
    <property type="evidence" value="ECO:0000250"/>
    <property type="project" value="UniProtKB"/>
</dbReference>
<dbReference type="GO" id="GO:0008270">
    <property type="term" value="F:zinc ion binding"/>
    <property type="evidence" value="ECO:0007669"/>
    <property type="project" value="UniProtKB-KW"/>
</dbReference>
<dbReference type="GO" id="GO:0060816">
    <property type="term" value="P:random inactivation of X chromosome"/>
    <property type="evidence" value="ECO:0000250"/>
    <property type="project" value="UniProtKB"/>
</dbReference>
<dbReference type="GO" id="GO:0006357">
    <property type="term" value="P:regulation of transcription by RNA polymerase II"/>
    <property type="evidence" value="ECO:0000318"/>
    <property type="project" value="GO_Central"/>
</dbReference>
<dbReference type="CDD" id="cd17083">
    <property type="entry name" value="RAWUL_PCGF3"/>
    <property type="match status" value="1"/>
</dbReference>
<dbReference type="CDD" id="cd16735">
    <property type="entry name" value="RING-HC_PCGF3"/>
    <property type="match status" value="1"/>
</dbReference>
<dbReference type="FunFam" id="3.10.20.90:FF:000073">
    <property type="entry name" value="Polycomb group RING finger protein 3"/>
    <property type="match status" value="1"/>
</dbReference>
<dbReference type="FunFam" id="3.30.40.10:FF:000033">
    <property type="entry name" value="Polycomb group RING finger protein 3"/>
    <property type="match status" value="1"/>
</dbReference>
<dbReference type="Gene3D" id="3.10.20.90">
    <property type="entry name" value="Phosphatidylinositol 3-kinase Catalytic Subunit, Chain A, domain 1"/>
    <property type="match status" value="1"/>
</dbReference>
<dbReference type="Gene3D" id="3.30.40.10">
    <property type="entry name" value="Zinc/RING finger domain, C3HC4 (zinc finger)"/>
    <property type="match status" value="1"/>
</dbReference>
<dbReference type="InterPro" id="IPR051507">
    <property type="entry name" value="PcG_RING_finger"/>
</dbReference>
<dbReference type="InterPro" id="IPR032443">
    <property type="entry name" value="RAWUL"/>
</dbReference>
<dbReference type="InterPro" id="IPR001841">
    <property type="entry name" value="Znf_RING"/>
</dbReference>
<dbReference type="InterPro" id="IPR013083">
    <property type="entry name" value="Znf_RING/FYVE/PHD"/>
</dbReference>
<dbReference type="InterPro" id="IPR017907">
    <property type="entry name" value="Znf_RING_CS"/>
</dbReference>
<dbReference type="PANTHER" id="PTHR45893">
    <property type="entry name" value="POLYCOMB GROUP RING FINGER PROTEIN"/>
    <property type="match status" value="1"/>
</dbReference>
<dbReference type="Pfam" id="PF16207">
    <property type="entry name" value="RAWUL"/>
    <property type="match status" value="1"/>
</dbReference>
<dbReference type="Pfam" id="PF13923">
    <property type="entry name" value="zf-C3HC4_2"/>
    <property type="match status" value="1"/>
</dbReference>
<dbReference type="SMART" id="SM00184">
    <property type="entry name" value="RING"/>
    <property type="match status" value="1"/>
</dbReference>
<dbReference type="SUPFAM" id="SSF57850">
    <property type="entry name" value="RING/U-box"/>
    <property type="match status" value="1"/>
</dbReference>
<dbReference type="PROSITE" id="PS00518">
    <property type="entry name" value="ZF_RING_1"/>
    <property type="match status" value="1"/>
</dbReference>
<dbReference type="PROSITE" id="PS50089">
    <property type="entry name" value="ZF_RING_2"/>
    <property type="match status" value="1"/>
</dbReference>
<evidence type="ECO:0000250" key="1">
    <source>
        <dbReference type="UniProtKB" id="Q3KNV8"/>
    </source>
</evidence>
<evidence type="ECO:0000250" key="2">
    <source>
        <dbReference type="UniProtKB" id="Q8BTQ0"/>
    </source>
</evidence>
<evidence type="ECO:0000255" key="3">
    <source>
        <dbReference type="PROSITE-ProRule" id="PRU00175"/>
    </source>
</evidence>
<evidence type="ECO:0000256" key="4">
    <source>
        <dbReference type="SAM" id="MobiDB-lite"/>
    </source>
</evidence>
<comment type="function">
    <text evidence="1 2">Component of a Polycomb group (PcG) multiprotein PRC1-like complex, a complex class required to maintain the transcriptionally repressive state of many genes, including Hox genes, throughout development. PcG PRC1 complex acts via chromatin remodeling and modification of histones; it mediates monoubiquitination of histone H2A 'Lys-119', rendering chromatin heritably changed in its expressibility (By similarity). Within the PRC1-like complex, regulates RNF2 ubiquitin ligase activity (By similarity). Plays a redundant role with PCGF5 as part of a PRC1-like complex that mediates monoubiquitination of histone H2A 'Lys-119' on the X chromosome and is required for normal silencing of one copy of the X chromosome in XX females (By similarity).</text>
</comment>
<comment type="subunit">
    <text evidence="1 2">Component of a PRC1-like complex that contains PCGF3, RNF2 and RYBP (By similarity). Interacts with CBX6, CBX7 and CBX8 (By similarity). Interacts with BCORL1 (By similarity).</text>
</comment>
<comment type="subcellular location">
    <subcellularLocation>
        <location evidence="2">Nucleus</location>
    </subcellularLocation>
    <subcellularLocation>
        <location evidence="2">Nucleus</location>
        <location evidence="2">Nucleoplasm</location>
    </subcellularLocation>
    <text evidence="2">Recruited by the non-coding RNA Xist to specific nuclear foci that probably correspond to the inactivated X chromosome.</text>
</comment>
<protein>
    <recommendedName>
        <fullName>Polycomb group RING finger protein 3</fullName>
    </recommendedName>
</protein>
<feature type="chain" id="PRO_0000277863" description="Polycomb group RING finger protein 3">
    <location>
        <begin position="1"/>
        <end position="242"/>
    </location>
</feature>
<feature type="zinc finger region" description="RING-type" evidence="3">
    <location>
        <begin position="17"/>
        <end position="56"/>
    </location>
</feature>
<feature type="region of interest" description="Disordered" evidence="4">
    <location>
        <begin position="115"/>
        <end position="149"/>
    </location>
</feature>
<feature type="region of interest" description="Interaction with BCORL1" evidence="1">
    <location>
        <begin position="132"/>
        <end position="242"/>
    </location>
</feature>
<feature type="compositionally biased region" description="Basic and acidic residues" evidence="4">
    <location>
        <begin position="117"/>
        <end position="140"/>
    </location>
</feature>
<organism>
    <name type="scientific">Bos taurus</name>
    <name type="common">Bovine</name>
    <dbReference type="NCBI Taxonomy" id="9913"/>
    <lineage>
        <taxon>Eukaryota</taxon>
        <taxon>Metazoa</taxon>
        <taxon>Chordata</taxon>
        <taxon>Craniata</taxon>
        <taxon>Vertebrata</taxon>
        <taxon>Euteleostomi</taxon>
        <taxon>Mammalia</taxon>
        <taxon>Eutheria</taxon>
        <taxon>Laurasiatheria</taxon>
        <taxon>Artiodactyla</taxon>
        <taxon>Ruminantia</taxon>
        <taxon>Pecora</taxon>
        <taxon>Bovidae</taxon>
        <taxon>Bovinae</taxon>
        <taxon>Bos</taxon>
    </lineage>
</organism>